<name>AROQ_SINMW</name>
<proteinExistence type="inferred from homology"/>
<accession>A6U828</accession>
<feature type="chain" id="PRO_1000023520" description="3-dehydroquinate dehydratase">
    <location>
        <begin position="1"/>
        <end position="148"/>
    </location>
</feature>
<feature type="active site" description="Proton acceptor" evidence="1">
    <location>
        <position position="24"/>
    </location>
</feature>
<feature type="active site" description="Proton donor" evidence="1">
    <location>
        <position position="101"/>
    </location>
</feature>
<feature type="binding site" evidence="1">
    <location>
        <position position="75"/>
    </location>
    <ligand>
        <name>substrate</name>
    </ligand>
</feature>
<feature type="binding site" evidence="1">
    <location>
        <position position="81"/>
    </location>
    <ligand>
        <name>substrate</name>
    </ligand>
</feature>
<feature type="binding site" evidence="1">
    <location>
        <position position="88"/>
    </location>
    <ligand>
        <name>substrate</name>
    </ligand>
</feature>
<feature type="binding site" evidence="1">
    <location>
        <begin position="102"/>
        <end position="103"/>
    </location>
    <ligand>
        <name>substrate</name>
    </ligand>
</feature>
<feature type="binding site" evidence="1">
    <location>
        <position position="112"/>
    </location>
    <ligand>
        <name>substrate</name>
    </ligand>
</feature>
<feature type="site" description="Transition state stabilizer" evidence="1">
    <location>
        <position position="19"/>
    </location>
</feature>
<gene>
    <name evidence="1" type="primary">aroQ</name>
    <name type="ordered locus">Smed_0954</name>
</gene>
<sequence length="148" mass="15971">MASTIFVLNGPNLNALGKREPGIYGGKTLADIEAMCKAEAKLLGFDIDFRQSNHEGTLVDWLHEAGEKSVGIAINPAAYGHTSIAMHDAIRAITVPVVELHLSNIHAREEFRHKSMIAPAVKGVICGFGAQSYILALHALKNLTEKSK</sequence>
<evidence type="ECO:0000255" key="1">
    <source>
        <dbReference type="HAMAP-Rule" id="MF_00169"/>
    </source>
</evidence>
<keyword id="KW-0028">Amino-acid biosynthesis</keyword>
<keyword id="KW-0057">Aromatic amino acid biosynthesis</keyword>
<keyword id="KW-0456">Lyase</keyword>
<protein>
    <recommendedName>
        <fullName evidence="1">3-dehydroquinate dehydratase</fullName>
        <shortName evidence="1">3-dehydroquinase</shortName>
        <ecNumber evidence="1">4.2.1.10</ecNumber>
    </recommendedName>
    <alternativeName>
        <fullName evidence="1">Type II DHQase</fullName>
    </alternativeName>
</protein>
<dbReference type="EC" id="4.2.1.10" evidence="1"/>
<dbReference type="EMBL" id="CP000738">
    <property type="protein sequence ID" value="ABR59808.1"/>
    <property type="molecule type" value="Genomic_DNA"/>
</dbReference>
<dbReference type="RefSeq" id="WP_011975144.1">
    <property type="nucleotide sequence ID" value="NC_009636.1"/>
</dbReference>
<dbReference type="RefSeq" id="YP_001326643.1">
    <property type="nucleotide sequence ID" value="NC_009636.1"/>
</dbReference>
<dbReference type="SMR" id="A6U828"/>
<dbReference type="STRING" id="366394.Smed_0954"/>
<dbReference type="GeneID" id="61612211"/>
<dbReference type="KEGG" id="smd:Smed_0954"/>
<dbReference type="PATRIC" id="fig|366394.8.peg.4069"/>
<dbReference type="eggNOG" id="COG0757">
    <property type="taxonomic scope" value="Bacteria"/>
</dbReference>
<dbReference type="HOGENOM" id="CLU_090968_2_0_5"/>
<dbReference type="OrthoDB" id="9790793at2"/>
<dbReference type="UniPathway" id="UPA00053">
    <property type="reaction ID" value="UER00086"/>
</dbReference>
<dbReference type="Proteomes" id="UP000001108">
    <property type="component" value="Chromosome"/>
</dbReference>
<dbReference type="GO" id="GO:0003855">
    <property type="term" value="F:3-dehydroquinate dehydratase activity"/>
    <property type="evidence" value="ECO:0007669"/>
    <property type="project" value="UniProtKB-UniRule"/>
</dbReference>
<dbReference type="GO" id="GO:0008652">
    <property type="term" value="P:amino acid biosynthetic process"/>
    <property type="evidence" value="ECO:0007669"/>
    <property type="project" value="UniProtKB-KW"/>
</dbReference>
<dbReference type="GO" id="GO:0009073">
    <property type="term" value="P:aromatic amino acid family biosynthetic process"/>
    <property type="evidence" value="ECO:0007669"/>
    <property type="project" value="UniProtKB-KW"/>
</dbReference>
<dbReference type="GO" id="GO:0009423">
    <property type="term" value="P:chorismate biosynthetic process"/>
    <property type="evidence" value="ECO:0007669"/>
    <property type="project" value="UniProtKB-UniRule"/>
</dbReference>
<dbReference type="GO" id="GO:0019631">
    <property type="term" value="P:quinate catabolic process"/>
    <property type="evidence" value="ECO:0007669"/>
    <property type="project" value="TreeGrafter"/>
</dbReference>
<dbReference type="CDD" id="cd00466">
    <property type="entry name" value="DHQase_II"/>
    <property type="match status" value="1"/>
</dbReference>
<dbReference type="Gene3D" id="3.40.50.9100">
    <property type="entry name" value="Dehydroquinase, class II"/>
    <property type="match status" value="1"/>
</dbReference>
<dbReference type="HAMAP" id="MF_00169">
    <property type="entry name" value="AroQ"/>
    <property type="match status" value="1"/>
</dbReference>
<dbReference type="InterPro" id="IPR001874">
    <property type="entry name" value="DHquinase_II"/>
</dbReference>
<dbReference type="InterPro" id="IPR018509">
    <property type="entry name" value="DHquinase_II_CS"/>
</dbReference>
<dbReference type="InterPro" id="IPR036441">
    <property type="entry name" value="DHquinase_II_sf"/>
</dbReference>
<dbReference type="NCBIfam" id="TIGR01088">
    <property type="entry name" value="aroQ"/>
    <property type="match status" value="1"/>
</dbReference>
<dbReference type="NCBIfam" id="NF003805">
    <property type="entry name" value="PRK05395.1-2"/>
    <property type="match status" value="1"/>
</dbReference>
<dbReference type="NCBIfam" id="NF003806">
    <property type="entry name" value="PRK05395.1-3"/>
    <property type="match status" value="1"/>
</dbReference>
<dbReference type="NCBIfam" id="NF003807">
    <property type="entry name" value="PRK05395.1-4"/>
    <property type="match status" value="1"/>
</dbReference>
<dbReference type="PANTHER" id="PTHR21272">
    <property type="entry name" value="CATABOLIC 3-DEHYDROQUINASE"/>
    <property type="match status" value="1"/>
</dbReference>
<dbReference type="PANTHER" id="PTHR21272:SF3">
    <property type="entry name" value="CATABOLIC 3-DEHYDROQUINASE"/>
    <property type="match status" value="1"/>
</dbReference>
<dbReference type="Pfam" id="PF01220">
    <property type="entry name" value="DHquinase_II"/>
    <property type="match status" value="1"/>
</dbReference>
<dbReference type="PIRSF" id="PIRSF001399">
    <property type="entry name" value="DHquinase_II"/>
    <property type="match status" value="1"/>
</dbReference>
<dbReference type="SUPFAM" id="SSF52304">
    <property type="entry name" value="Type II 3-dehydroquinate dehydratase"/>
    <property type="match status" value="1"/>
</dbReference>
<dbReference type="PROSITE" id="PS01029">
    <property type="entry name" value="DEHYDROQUINASE_II"/>
    <property type="match status" value="1"/>
</dbReference>
<comment type="function">
    <text evidence="1">Catalyzes a trans-dehydration via an enolate intermediate.</text>
</comment>
<comment type="catalytic activity">
    <reaction evidence="1">
        <text>3-dehydroquinate = 3-dehydroshikimate + H2O</text>
        <dbReference type="Rhea" id="RHEA:21096"/>
        <dbReference type="ChEBI" id="CHEBI:15377"/>
        <dbReference type="ChEBI" id="CHEBI:16630"/>
        <dbReference type="ChEBI" id="CHEBI:32364"/>
        <dbReference type="EC" id="4.2.1.10"/>
    </reaction>
</comment>
<comment type="pathway">
    <text evidence="1">Metabolic intermediate biosynthesis; chorismate biosynthesis; chorismate from D-erythrose 4-phosphate and phosphoenolpyruvate: step 3/7.</text>
</comment>
<comment type="subunit">
    <text evidence="1">Homododecamer.</text>
</comment>
<comment type="similarity">
    <text evidence="1">Belongs to the type-II 3-dehydroquinase family.</text>
</comment>
<organism>
    <name type="scientific">Sinorhizobium medicae (strain WSM419)</name>
    <name type="common">Ensifer medicae</name>
    <dbReference type="NCBI Taxonomy" id="366394"/>
    <lineage>
        <taxon>Bacteria</taxon>
        <taxon>Pseudomonadati</taxon>
        <taxon>Pseudomonadota</taxon>
        <taxon>Alphaproteobacteria</taxon>
        <taxon>Hyphomicrobiales</taxon>
        <taxon>Rhizobiaceae</taxon>
        <taxon>Sinorhizobium/Ensifer group</taxon>
        <taxon>Sinorhizobium</taxon>
    </lineage>
</organism>
<reference key="1">
    <citation type="submission" date="2007-06" db="EMBL/GenBank/DDBJ databases">
        <title>Complete sequence of Sinorhizobium medicae WSM419 chromosome.</title>
        <authorList>
            <consortium name="US DOE Joint Genome Institute"/>
            <person name="Copeland A."/>
            <person name="Lucas S."/>
            <person name="Lapidus A."/>
            <person name="Barry K."/>
            <person name="Glavina del Rio T."/>
            <person name="Dalin E."/>
            <person name="Tice H."/>
            <person name="Pitluck S."/>
            <person name="Chain P."/>
            <person name="Malfatti S."/>
            <person name="Shin M."/>
            <person name="Vergez L."/>
            <person name="Schmutz J."/>
            <person name="Larimer F."/>
            <person name="Land M."/>
            <person name="Hauser L."/>
            <person name="Kyrpides N."/>
            <person name="Mikhailova N."/>
            <person name="Reeve W.G."/>
            <person name="Richardson P."/>
        </authorList>
    </citation>
    <scope>NUCLEOTIDE SEQUENCE [LARGE SCALE GENOMIC DNA]</scope>
    <source>
        <strain>WSM419</strain>
    </source>
</reference>